<protein>
    <recommendedName>
        <fullName evidence="1">Large ribosomal subunit protein uL22</fullName>
    </recommendedName>
    <alternativeName>
        <fullName evidence="2">50S ribosomal protein L22</fullName>
    </alternativeName>
</protein>
<comment type="function">
    <text evidence="1">This protein binds specifically to 23S rRNA; its binding is stimulated by other ribosomal proteins, e.g. L4, L17, and L20. It is important during the early stages of 50S assembly. It makes multiple contacts with different domains of the 23S rRNA in the assembled 50S subunit and ribosome (By similarity).</text>
</comment>
<comment type="function">
    <text evidence="1">The globular domain of the protein is located near the polypeptide exit tunnel on the outside of the subunit, while an extended beta-hairpin is found that lines the wall of the exit tunnel in the center of the 70S ribosome.</text>
</comment>
<comment type="subunit">
    <text evidence="1">Part of the 50S ribosomal subunit.</text>
</comment>
<comment type="similarity">
    <text evidence="1">Belongs to the universal ribosomal protein uL22 family.</text>
</comment>
<organism>
    <name type="scientific">Azoarcus sp. (strain BH72)</name>
    <dbReference type="NCBI Taxonomy" id="418699"/>
    <lineage>
        <taxon>Bacteria</taxon>
        <taxon>Pseudomonadati</taxon>
        <taxon>Pseudomonadota</taxon>
        <taxon>Betaproteobacteria</taxon>
        <taxon>Rhodocyclales</taxon>
        <taxon>Zoogloeaceae</taxon>
        <taxon>Azoarcus</taxon>
    </lineage>
</organism>
<keyword id="KW-1185">Reference proteome</keyword>
<keyword id="KW-0687">Ribonucleoprotein</keyword>
<keyword id="KW-0689">Ribosomal protein</keyword>
<keyword id="KW-0694">RNA-binding</keyword>
<keyword id="KW-0699">rRNA-binding</keyword>
<gene>
    <name evidence="1" type="primary">rplV</name>
    <name type="ordered locus">azo3412</name>
</gene>
<reference key="1">
    <citation type="journal article" date="2006" name="Nat. Biotechnol.">
        <title>Complete genome of the mutualistic, N2-fixing grass endophyte Azoarcus sp. strain BH72.</title>
        <authorList>
            <person name="Krause A."/>
            <person name="Ramakumar A."/>
            <person name="Bartels D."/>
            <person name="Battistoni F."/>
            <person name="Bekel T."/>
            <person name="Boch J."/>
            <person name="Boehm M."/>
            <person name="Friedrich F."/>
            <person name="Hurek T."/>
            <person name="Krause L."/>
            <person name="Linke B."/>
            <person name="McHardy A.C."/>
            <person name="Sarkar A."/>
            <person name="Schneiker S."/>
            <person name="Syed A.A."/>
            <person name="Thauer R."/>
            <person name="Vorhoelter F.-J."/>
            <person name="Weidner S."/>
            <person name="Puehler A."/>
            <person name="Reinhold-Hurek B."/>
            <person name="Kaiser O."/>
            <person name="Goesmann A."/>
        </authorList>
    </citation>
    <scope>NUCLEOTIDE SEQUENCE [LARGE SCALE GENOMIC DNA]</scope>
    <source>
        <strain>BH72</strain>
    </source>
</reference>
<evidence type="ECO:0000255" key="1">
    <source>
        <dbReference type="HAMAP-Rule" id="MF_01331"/>
    </source>
</evidence>
<evidence type="ECO:0000305" key="2"/>
<dbReference type="EMBL" id="AM406670">
    <property type="protein sequence ID" value="CAL96028.1"/>
    <property type="molecule type" value="Genomic_DNA"/>
</dbReference>
<dbReference type="RefSeq" id="WP_011767135.1">
    <property type="nucleotide sequence ID" value="NC_008702.1"/>
</dbReference>
<dbReference type="SMR" id="A1KB22"/>
<dbReference type="STRING" id="62928.azo3412"/>
<dbReference type="KEGG" id="aoa:dqs_3551"/>
<dbReference type="KEGG" id="azo:azo3412"/>
<dbReference type="eggNOG" id="COG0091">
    <property type="taxonomic scope" value="Bacteria"/>
</dbReference>
<dbReference type="HOGENOM" id="CLU_083987_3_3_4"/>
<dbReference type="OrthoDB" id="9805969at2"/>
<dbReference type="Proteomes" id="UP000002588">
    <property type="component" value="Chromosome"/>
</dbReference>
<dbReference type="GO" id="GO:0022625">
    <property type="term" value="C:cytosolic large ribosomal subunit"/>
    <property type="evidence" value="ECO:0007669"/>
    <property type="project" value="TreeGrafter"/>
</dbReference>
<dbReference type="GO" id="GO:0019843">
    <property type="term" value="F:rRNA binding"/>
    <property type="evidence" value="ECO:0007669"/>
    <property type="project" value="UniProtKB-UniRule"/>
</dbReference>
<dbReference type="GO" id="GO:0003735">
    <property type="term" value="F:structural constituent of ribosome"/>
    <property type="evidence" value="ECO:0007669"/>
    <property type="project" value="InterPro"/>
</dbReference>
<dbReference type="GO" id="GO:0006412">
    <property type="term" value="P:translation"/>
    <property type="evidence" value="ECO:0007669"/>
    <property type="project" value="UniProtKB-UniRule"/>
</dbReference>
<dbReference type="CDD" id="cd00336">
    <property type="entry name" value="Ribosomal_L22"/>
    <property type="match status" value="1"/>
</dbReference>
<dbReference type="FunFam" id="3.90.470.10:FF:000001">
    <property type="entry name" value="50S ribosomal protein L22"/>
    <property type="match status" value="1"/>
</dbReference>
<dbReference type="Gene3D" id="3.90.470.10">
    <property type="entry name" value="Ribosomal protein L22/L17"/>
    <property type="match status" value="1"/>
</dbReference>
<dbReference type="HAMAP" id="MF_01331_B">
    <property type="entry name" value="Ribosomal_uL22_B"/>
    <property type="match status" value="1"/>
</dbReference>
<dbReference type="InterPro" id="IPR001063">
    <property type="entry name" value="Ribosomal_uL22"/>
</dbReference>
<dbReference type="InterPro" id="IPR005727">
    <property type="entry name" value="Ribosomal_uL22_bac/chlpt-type"/>
</dbReference>
<dbReference type="InterPro" id="IPR047867">
    <property type="entry name" value="Ribosomal_uL22_bac/org-type"/>
</dbReference>
<dbReference type="InterPro" id="IPR018260">
    <property type="entry name" value="Ribosomal_uL22_CS"/>
</dbReference>
<dbReference type="InterPro" id="IPR036394">
    <property type="entry name" value="Ribosomal_uL22_sf"/>
</dbReference>
<dbReference type="NCBIfam" id="TIGR01044">
    <property type="entry name" value="rplV_bact"/>
    <property type="match status" value="1"/>
</dbReference>
<dbReference type="PANTHER" id="PTHR13501">
    <property type="entry name" value="CHLOROPLAST 50S RIBOSOMAL PROTEIN L22-RELATED"/>
    <property type="match status" value="1"/>
</dbReference>
<dbReference type="PANTHER" id="PTHR13501:SF8">
    <property type="entry name" value="LARGE RIBOSOMAL SUBUNIT PROTEIN UL22M"/>
    <property type="match status" value="1"/>
</dbReference>
<dbReference type="Pfam" id="PF00237">
    <property type="entry name" value="Ribosomal_L22"/>
    <property type="match status" value="1"/>
</dbReference>
<dbReference type="SUPFAM" id="SSF54843">
    <property type="entry name" value="Ribosomal protein L22"/>
    <property type="match status" value="1"/>
</dbReference>
<dbReference type="PROSITE" id="PS00464">
    <property type="entry name" value="RIBOSOMAL_L22"/>
    <property type="match status" value="1"/>
</dbReference>
<proteinExistence type="inferred from homology"/>
<sequence length="109" mass="11840">METKAILRGVRLSAQKGRLVADLVRGKSVDQALNILAFSPKKGAKIIRKVVESAIANAEHNDGADIDALKVKTIYVEEGTTLKRFTARAKGRGNRILKPTCHVFVTVGE</sequence>
<accession>A1KB22</accession>
<feature type="chain" id="PRO_1000052537" description="Large ribosomal subunit protein uL22">
    <location>
        <begin position="1"/>
        <end position="109"/>
    </location>
</feature>
<name>RL22_AZOSB</name>